<evidence type="ECO:0000255" key="1">
    <source>
        <dbReference type="HAMAP-Rule" id="MF_00150"/>
    </source>
</evidence>
<gene>
    <name evidence="1" type="primary">argC</name>
    <name type="ordered locus">Moth_2290</name>
</gene>
<proteinExistence type="inferred from homology"/>
<comment type="function">
    <text evidence="1">Catalyzes the NADPH-dependent reduction of N-acetyl-5-glutamyl phosphate to yield N-acetyl-L-glutamate 5-semialdehyde.</text>
</comment>
<comment type="catalytic activity">
    <reaction evidence="1">
        <text>N-acetyl-L-glutamate 5-semialdehyde + phosphate + NADP(+) = N-acetyl-L-glutamyl 5-phosphate + NADPH + H(+)</text>
        <dbReference type="Rhea" id="RHEA:21588"/>
        <dbReference type="ChEBI" id="CHEBI:15378"/>
        <dbReference type="ChEBI" id="CHEBI:29123"/>
        <dbReference type="ChEBI" id="CHEBI:43474"/>
        <dbReference type="ChEBI" id="CHEBI:57783"/>
        <dbReference type="ChEBI" id="CHEBI:57936"/>
        <dbReference type="ChEBI" id="CHEBI:58349"/>
        <dbReference type="EC" id="1.2.1.38"/>
    </reaction>
</comment>
<comment type="pathway">
    <text evidence="1">Amino-acid biosynthesis; L-arginine biosynthesis; N(2)-acetyl-L-ornithine from L-glutamate: step 3/4.</text>
</comment>
<comment type="subcellular location">
    <subcellularLocation>
        <location evidence="1">Cytoplasm</location>
    </subcellularLocation>
</comment>
<comment type="similarity">
    <text evidence="1">Belongs to the NAGSA dehydrogenase family. Type 1 subfamily.</text>
</comment>
<reference key="1">
    <citation type="journal article" date="2008" name="Environ. Microbiol.">
        <title>The complete genome sequence of Moorella thermoacetica (f. Clostridium thermoaceticum).</title>
        <authorList>
            <person name="Pierce E."/>
            <person name="Xie G."/>
            <person name="Barabote R.D."/>
            <person name="Saunders E."/>
            <person name="Han C.S."/>
            <person name="Detter J.C."/>
            <person name="Richardson P."/>
            <person name="Brettin T.S."/>
            <person name="Das A."/>
            <person name="Ljungdahl L.G."/>
            <person name="Ragsdale S.W."/>
        </authorList>
    </citation>
    <scope>NUCLEOTIDE SEQUENCE [LARGE SCALE GENOMIC DNA]</scope>
    <source>
        <strain>ATCC 39073 / JCM 9320</strain>
    </source>
</reference>
<sequence length="346" mass="37549">MIKAGIIGATGYTGAELVRILSRHPEVELVALTSRSYAGEGMAGVYPSLTGYTNLTCENLTPDEVMDRAEVIFIALPHGHAVPVATRARERGIKVIDLGADWRFRNARTYEEWYKIQHGNHELAARAVYGLPEIHREAIRSAGLVANPGCYPTSAILGLAPLLKGGYIDPATIIIDAKSGVSGAGREARVTSLFVECNESINPYGVASHRHTPEIEQELSALAGKEVKVTFTPHLLPISRGILSTMYATLVRPASTEELRRVYEKFYAGEPFVHLLPPGQWPHTRWVYGSNNCHLNLAVDTRTGRVVVASAIDNLTKGASGQAVQNLNLMCGFPETMALEVPGLCP</sequence>
<protein>
    <recommendedName>
        <fullName evidence="1">N-acetyl-gamma-glutamyl-phosphate reductase</fullName>
        <shortName evidence="1">AGPR</shortName>
        <ecNumber evidence="1">1.2.1.38</ecNumber>
    </recommendedName>
    <alternativeName>
        <fullName evidence="1">N-acetyl-glutamate semialdehyde dehydrogenase</fullName>
        <shortName evidence="1">NAGSA dehydrogenase</shortName>
    </alternativeName>
</protein>
<name>ARGC_MOOTA</name>
<organism>
    <name type="scientific">Moorella thermoacetica (strain ATCC 39073 / JCM 9320)</name>
    <dbReference type="NCBI Taxonomy" id="264732"/>
    <lineage>
        <taxon>Bacteria</taxon>
        <taxon>Bacillati</taxon>
        <taxon>Bacillota</taxon>
        <taxon>Clostridia</taxon>
        <taxon>Moorellales</taxon>
        <taxon>Moorellaceae</taxon>
        <taxon>Moorella</taxon>
    </lineage>
</organism>
<accession>Q2RG62</accession>
<feature type="chain" id="PRO_1000011019" description="N-acetyl-gamma-glutamyl-phosphate reductase">
    <location>
        <begin position="1"/>
        <end position="346"/>
    </location>
</feature>
<feature type="active site" evidence="1">
    <location>
        <position position="150"/>
    </location>
</feature>
<keyword id="KW-0028">Amino-acid biosynthesis</keyword>
<keyword id="KW-0055">Arginine biosynthesis</keyword>
<keyword id="KW-0963">Cytoplasm</keyword>
<keyword id="KW-0521">NADP</keyword>
<keyword id="KW-0560">Oxidoreductase</keyword>
<dbReference type="EC" id="1.2.1.38" evidence="1"/>
<dbReference type="EMBL" id="CP000232">
    <property type="protein sequence ID" value="ABC20577.1"/>
    <property type="molecule type" value="Genomic_DNA"/>
</dbReference>
<dbReference type="RefSeq" id="YP_431120.1">
    <property type="nucleotide sequence ID" value="NC_007644.1"/>
</dbReference>
<dbReference type="SMR" id="Q2RG62"/>
<dbReference type="STRING" id="264732.Moth_2290"/>
<dbReference type="EnsemblBacteria" id="ABC20577">
    <property type="protein sequence ID" value="ABC20577"/>
    <property type="gene ID" value="Moth_2290"/>
</dbReference>
<dbReference type="KEGG" id="mta:Moth_2290"/>
<dbReference type="PATRIC" id="fig|264732.11.peg.2494"/>
<dbReference type="eggNOG" id="COG0002">
    <property type="taxonomic scope" value="Bacteria"/>
</dbReference>
<dbReference type="HOGENOM" id="CLU_006384_0_1_9"/>
<dbReference type="OrthoDB" id="9801289at2"/>
<dbReference type="UniPathway" id="UPA00068">
    <property type="reaction ID" value="UER00108"/>
</dbReference>
<dbReference type="GO" id="GO:0005737">
    <property type="term" value="C:cytoplasm"/>
    <property type="evidence" value="ECO:0007669"/>
    <property type="project" value="UniProtKB-SubCell"/>
</dbReference>
<dbReference type="GO" id="GO:0003942">
    <property type="term" value="F:N-acetyl-gamma-glutamyl-phosphate reductase activity"/>
    <property type="evidence" value="ECO:0007669"/>
    <property type="project" value="UniProtKB-UniRule"/>
</dbReference>
<dbReference type="GO" id="GO:0051287">
    <property type="term" value="F:NAD binding"/>
    <property type="evidence" value="ECO:0007669"/>
    <property type="project" value="InterPro"/>
</dbReference>
<dbReference type="GO" id="GO:0070401">
    <property type="term" value="F:NADP+ binding"/>
    <property type="evidence" value="ECO:0007669"/>
    <property type="project" value="InterPro"/>
</dbReference>
<dbReference type="GO" id="GO:0006526">
    <property type="term" value="P:L-arginine biosynthetic process"/>
    <property type="evidence" value="ECO:0007669"/>
    <property type="project" value="UniProtKB-UniRule"/>
</dbReference>
<dbReference type="CDD" id="cd23934">
    <property type="entry name" value="AGPR_1_C"/>
    <property type="match status" value="1"/>
</dbReference>
<dbReference type="CDD" id="cd17895">
    <property type="entry name" value="AGPR_1_N"/>
    <property type="match status" value="1"/>
</dbReference>
<dbReference type="FunFam" id="3.30.360.10:FF:000014">
    <property type="entry name" value="N-acetyl-gamma-glutamyl-phosphate reductase"/>
    <property type="match status" value="1"/>
</dbReference>
<dbReference type="Gene3D" id="3.30.360.10">
    <property type="entry name" value="Dihydrodipicolinate Reductase, domain 2"/>
    <property type="match status" value="1"/>
</dbReference>
<dbReference type="Gene3D" id="3.40.50.720">
    <property type="entry name" value="NAD(P)-binding Rossmann-like Domain"/>
    <property type="match status" value="1"/>
</dbReference>
<dbReference type="HAMAP" id="MF_00150">
    <property type="entry name" value="ArgC_type1"/>
    <property type="match status" value="1"/>
</dbReference>
<dbReference type="InterPro" id="IPR023013">
    <property type="entry name" value="AGPR_AS"/>
</dbReference>
<dbReference type="InterPro" id="IPR000706">
    <property type="entry name" value="AGPR_type-1"/>
</dbReference>
<dbReference type="InterPro" id="IPR036291">
    <property type="entry name" value="NAD(P)-bd_dom_sf"/>
</dbReference>
<dbReference type="InterPro" id="IPR050085">
    <property type="entry name" value="NAGSA_dehydrogenase"/>
</dbReference>
<dbReference type="InterPro" id="IPR000534">
    <property type="entry name" value="Semialdehyde_DH_NAD-bd"/>
</dbReference>
<dbReference type="NCBIfam" id="TIGR01850">
    <property type="entry name" value="argC"/>
    <property type="match status" value="1"/>
</dbReference>
<dbReference type="PANTHER" id="PTHR32338:SF10">
    <property type="entry name" value="N-ACETYL-GAMMA-GLUTAMYL-PHOSPHATE REDUCTASE, CHLOROPLASTIC-RELATED"/>
    <property type="match status" value="1"/>
</dbReference>
<dbReference type="PANTHER" id="PTHR32338">
    <property type="entry name" value="N-ACETYL-GAMMA-GLUTAMYL-PHOSPHATE REDUCTASE, CHLOROPLASTIC-RELATED-RELATED"/>
    <property type="match status" value="1"/>
</dbReference>
<dbReference type="Pfam" id="PF01118">
    <property type="entry name" value="Semialdhyde_dh"/>
    <property type="match status" value="1"/>
</dbReference>
<dbReference type="Pfam" id="PF22698">
    <property type="entry name" value="Semialdhyde_dhC_1"/>
    <property type="match status" value="1"/>
</dbReference>
<dbReference type="SMART" id="SM00859">
    <property type="entry name" value="Semialdhyde_dh"/>
    <property type="match status" value="1"/>
</dbReference>
<dbReference type="SUPFAM" id="SSF55347">
    <property type="entry name" value="Glyceraldehyde-3-phosphate dehydrogenase-like, C-terminal domain"/>
    <property type="match status" value="1"/>
</dbReference>
<dbReference type="SUPFAM" id="SSF51735">
    <property type="entry name" value="NAD(P)-binding Rossmann-fold domains"/>
    <property type="match status" value="1"/>
</dbReference>
<dbReference type="PROSITE" id="PS01224">
    <property type="entry name" value="ARGC"/>
    <property type="match status" value="1"/>
</dbReference>